<proteinExistence type="evidence at protein level"/>
<dbReference type="EMBL" id="AC110530">
    <property type="status" value="NOT_ANNOTATED_CDS"/>
    <property type="molecule type" value="Genomic_DNA"/>
</dbReference>
<dbReference type="EMBL" id="AF064874">
    <property type="protein sequence ID" value="AAC40126.1"/>
    <property type="molecule type" value="mRNA"/>
</dbReference>
<dbReference type="EMBL" id="BC158106">
    <property type="protein sequence ID" value="AAI58107.1"/>
    <property type="molecule type" value="mRNA"/>
</dbReference>
<dbReference type="EMBL" id="BC158108">
    <property type="protein sequence ID" value="AAI58109.1"/>
    <property type="molecule type" value="mRNA"/>
</dbReference>
<dbReference type="CCDS" id="CCDS52815.1"/>
<dbReference type="RefSeq" id="NP_001074661.1">
    <property type="nucleotide sequence ID" value="NM_001081192.3"/>
</dbReference>
<dbReference type="SMR" id="O70507"/>
<dbReference type="ComplexPortal" id="CPX-139">
    <property type="entry name" value="HCN4 channel complex"/>
</dbReference>
<dbReference type="FunCoup" id="O70507">
    <property type="interactions" value="117"/>
</dbReference>
<dbReference type="IntAct" id="O70507">
    <property type="interactions" value="3"/>
</dbReference>
<dbReference type="MINT" id="O70507"/>
<dbReference type="STRING" id="10090.ENSMUSP00000034889"/>
<dbReference type="BindingDB" id="O70507"/>
<dbReference type="ChEMBL" id="CHEMBL4523149"/>
<dbReference type="DrugCentral" id="O70507"/>
<dbReference type="GuidetoPHARMACOLOGY" id="403"/>
<dbReference type="GlyCosmos" id="O70507">
    <property type="glycosylation" value="1 site, No reported glycans"/>
</dbReference>
<dbReference type="GlyGen" id="O70507">
    <property type="glycosylation" value="6 sites, 1 O-linked glycan (2 sites)"/>
</dbReference>
<dbReference type="iPTMnet" id="O70507"/>
<dbReference type="PhosphoSitePlus" id="O70507"/>
<dbReference type="SwissPalm" id="O70507"/>
<dbReference type="PaxDb" id="10090-ENSMUSP00000034889"/>
<dbReference type="PeptideAtlas" id="O70507"/>
<dbReference type="ProteomicsDB" id="271496"/>
<dbReference type="ProteomicsDB" id="337092"/>
<dbReference type="ABCD" id="O70507">
    <property type="antibodies" value="1 sequenced antibody"/>
</dbReference>
<dbReference type="Antibodypedia" id="26787">
    <property type="antibodies" value="179 antibodies from 33 providers"/>
</dbReference>
<dbReference type="DNASU" id="330953"/>
<dbReference type="Ensembl" id="ENSMUST00000034889.10">
    <property type="protein sequence ID" value="ENSMUSP00000034889.9"/>
    <property type="gene ID" value="ENSMUSG00000032338.10"/>
</dbReference>
<dbReference type="GeneID" id="330953"/>
<dbReference type="KEGG" id="mmu:330953"/>
<dbReference type="AGR" id="MGI:1298209"/>
<dbReference type="CTD" id="10021"/>
<dbReference type="MGI" id="MGI:1298209">
    <property type="gene designation" value="Hcn4"/>
</dbReference>
<dbReference type="VEuPathDB" id="HostDB:ENSMUSG00000032338"/>
<dbReference type="eggNOG" id="KOG0498">
    <property type="taxonomic scope" value="Eukaryota"/>
</dbReference>
<dbReference type="GeneTree" id="ENSGT00940000154743"/>
<dbReference type="HOGENOM" id="CLU_005746_15_0_1"/>
<dbReference type="InParanoid" id="O70507"/>
<dbReference type="OMA" id="FRAQHMT"/>
<dbReference type="OrthoDB" id="421226at2759"/>
<dbReference type="PhylomeDB" id="O70507"/>
<dbReference type="TreeFam" id="TF318250"/>
<dbReference type="Reactome" id="R-MMU-1296061">
    <property type="pathway name" value="HCN channels"/>
</dbReference>
<dbReference type="BioGRID-ORCS" id="330953">
    <property type="hits" value="2 hits in 79 CRISPR screens"/>
</dbReference>
<dbReference type="ChiTaRS" id="Hcn4">
    <property type="organism name" value="mouse"/>
</dbReference>
<dbReference type="PRO" id="PR:O70507"/>
<dbReference type="Proteomes" id="UP000000589">
    <property type="component" value="Chromosome 9"/>
</dbReference>
<dbReference type="RNAct" id="O70507">
    <property type="molecule type" value="protein"/>
</dbReference>
<dbReference type="Bgee" id="ENSMUSG00000032338">
    <property type="expression patterns" value="Expressed in myocardium and 57 other cell types or tissues"/>
</dbReference>
<dbReference type="GO" id="GO:0030424">
    <property type="term" value="C:axon"/>
    <property type="evidence" value="ECO:0000314"/>
    <property type="project" value="MGI"/>
</dbReference>
<dbReference type="GO" id="GO:0034702">
    <property type="term" value="C:monoatomic ion channel complex"/>
    <property type="evidence" value="ECO:0007669"/>
    <property type="project" value="UniProtKB-KW"/>
</dbReference>
<dbReference type="GO" id="GO:0005886">
    <property type="term" value="C:plasma membrane"/>
    <property type="evidence" value="ECO:0000250"/>
    <property type="project" value="UniProtKB"/>
</dbReference>
<dbReference type="GO" id="GO:0030552">
    <property type="term" value="F:cAMP binding"/>
    <property type="evidence" value="ECO:0007669"/>
    <property type="project" value="UniProtKB-KW"/>
</dbReference>
<dbReference type="GO" id="GO:0005222">
    <property type="term" value="F:intracellularly cAMP-activated cation channel activity"/>
    <property type="evidence" value="ECO:0000315"/>
    <property type="project" value="MGI"/>
</dbReference>
<dbReference type="GO" id="GO:0005272">
    <property type="term" value="F:sodium channel activity"/>
    <property type="evidence" value="ECO:0007669"/>
    <property type="project" value="UniProtKB-KW"/>
</dbReference>
<dbReference type="GO" id="GO:0005249">
    <property type="term" value="F:voltage-gated potassium channel activity"/>
    <property type="evidence" value="ECO:0000250"/>
    <property type="project" value="UniProtKB"/>
</dbReference>
<dbReference type="GO" id="GO:0071320">
    <property type="term" value="P:cellular response to cAMP"/>
    <property type="evidence" value="ECO:0000250"/>
    <property type="project" value="UniProtKB"/>
</dbReference>
<dbReference type="GO" id="GO:0001701">
    <property type="term" value="P:in utero embryonic development"/>
    <property type="evidence" value="ECO:0000315"/>
    <property type="project" value="MGI"/>
</dbReference>
<dbReference type="GO" id="GO:0006812">
    <property type="term" value="P:monoatomic cation transport"/>
    <property type="evidence" value="ECO:0000315"/>
    <property type="project" value="MGI"/>
</dbReference>
<dbReference type="GO" id="GO:0071805">
    <property type="term" value="P:potassium ion transmembrane transport"/>
    <property type="evidence" value="ECO:0000250"/>
    <property type="project" value="UniProtKB"/>
</dbReference>
<dbReference type="GO" id="GO:0008016">
    <property type="term" value="P:regulation of heart contraction"/>
    <property type="evidence" value="ECO:0000315"/>
    <property type="project" value="MGI"/>
</dbReference>
<dbReference type="GO" id="GO:0002027">
    <property type="term" value="P:regulation of heart rate"/>
    <property type="evidence" value="ECO:0000250"/>
    <property type="project" value="UniProtKB"/>
</dbReference>
<dbReference type="CDD" id="cd00038">
    <property type="entry name" value="CAP_ED"/>
    <property type="match status" value="1"/>
</dbReference>
<dbReference type="FunFam" id="1.10.287.70:FF:000031">
    <property type="entry name" value="Potassium/sodium hyperpolarization-activated cyclic nucleotide-gated channel 1, putative"/>
    <property type="match status" value="1"/>
</dbReference>
<dbReference type="FunFam" id="1.10.287.630:FF:000002">
    <property type="entry name" value="Potassium/sodium hyperpolarization-activated cyclic nucleotide-gated channel 4"/>
    <property type="match status" value="1"/>
</dbReference>
<dbReference type="FunFam" id="2.60.120.10:FF:000007">
    <property type="entry name" value="Putative potassium/sodium hyperpolarization-activated cyclic nucleotide-gated channel 2"/>
    <property type="match status" value="1"/>
</dbReference>
<dbReference type="Gene3D" id="1.10.287.70">
    <property type="match status" value="1"/>
</dbReference>
<dbReference type="Gene3D" id="1.10.287.630">
    <property type="entry name" value="Helix hairpin bin"/>
    <property type="match status" value="1"/>
</dbReference>
<dbReference type="Gene3D" id="2.60.120.10">
    <property type="entry name" value="Jelly Rolls"/>
    <property type="match status" value="1"/>
</dbReference>
<dbReference type="InterPro" id="IPR018488">
    <property type="entry name" value="cNMP-bd_CS"/>
</dbReference>
<dbReference type="InterPro" id="IPR000595">
    <property type="entry name" value="cNMP-bd_dom"/>
</dbReference>
<dbReference type="InterPro" id="IPR018490">
    <property type="entry name" value="cNMP-bd_dom_sf"/>
</dbReference>
<dbReference type="InterPro" id="IPR005821">
    <property type="entry name" value="Ion_trans_dom"/>
</dbReference>
<dbReference type="InterPro" id="IPR013621">
    <property type="entry name" value="Ion_trans_N"/>
</dbReference>
<dbReference type="InterPro" id="IPR051413">
    <property type="entry name" value="K/Na_HCN_channel"/>
</dbReference>
<dbReference type="InterPro" id="IPR003938">
    <property type="entry name" value="K_chnl_volt-dep_EAG/ELK/ERG"/>
</dbReference>
<dbReference type="InterPro" id="IPR014710">
    <property type="entry name" value="RmlC-like_jellyroll"/>
</dbReference>
<dbReference type="PANTHER" id="PTHR45689">
    <property type="entry name" value="I[[H]] CHANNEL, ISOFORM E"/>
    <property type="match status" value="1"/>
</dbReference>
<dbReference type="PANTHER" id="PTHR45689:SF4">
    <property type="entry name" value="POTASSIUM_SODIUM HYPERPOLARIZATION-ACTIVATED CYCLIC NUCLEOTIDE-GATED CHANNEL 4"/>
    <property type="match status" value="1"/>
</dbReference>
<dbReference type="Pfam" id="PF00027">
    <property type="entry name" value="cNMP_binding"/>
    <property type="match status" value="1"/>
</dbReference>
<dbReference type="Pfam" id="PF00520">
    <property type="entry name" value="Ion_trans"/>
    <property type="match status" value="1"/>
</dbReference>
<dbReference type="Pfam" id="PF08412">
    <property type="entry name" value="Ion_trans_N"/>
    <property type="match status" value="1"/>
</dbReference>
<dbReference type="PRINTS" id="PR01463">
    <property type="entry name" value="EAGCHANLFMLY"/>
</dbReference>
<dbReference type="SMART" id="SM00100">
    <property type="entry name" value="cNMP"/>
    <property type="match status" value="1"/>
</dbReference>
<dbReference type="SUPFAM" id="SSF51206">
    <property type="entry name" value="cAMP-binding domain-like"/>
    <property type="match status" value="1"/>
</dbReference>
<dbReference type="SUPFAM" id="SSF81324">
    <property type="entry name" value="Voltage-gated potassium channels"/>
    <property type="match status" value="1"/>
</dbReference>
<dbReference type="PROSITE" id="PS00888">
    <property type="entry name" value="CNMP_BINDING_1"/>
    <property type="match status" value="1"/>
</dbReference>
<dbReference type="PROSITE" id="PS50042">
    <property type="entry name" value="CNMP_BINDING_3"/>
    <property type="match status" value="1"/>
</dbReference>
<reference key="1">
    <citation type="journal article" date="2009" name="PLoS Biol.">
        <title>Lineage-specific biology revealed by a finished genome assembly of the mouse.</title>
        <authorList>
            <person name="Church D.M."/>
            <person name="Goodstadt L."/>
            <person name="Hillier L.W."/>
            <person name="Zody M.C."/>
            <person name="Goldstein S."/>
            <person name="She X."/>
            <person name="Bult C.J."/>
            <person name="Agarwala R."/>
            <person name="Cherry J.L."/>
            <person name="DiCuccio M."/>
            <person name="Hlavina W."/>
            <person name="Kapustin Y."/>
            <person name="Meric P."/>
            <person name="Maglott D."/>
            <person name="Birtle Z."/>
            <person name="Marques A.C."/>
            <person name="Graves T."/>
            <person name="Zhou S."/>
            <person name="Teague B."/>
            <person name="Potamousis K."/>
            <person name="Churas C."/>
            <person name="Place M."/>
            <person name="Herschleb J."/>
            <person name="Runnheim R."/>
            <person name="Forrest D."/>
            <person name="Amos-Landgraf J."/>
            <person name="Schwartz D.C."/>
            <person name="Cheng Z."/>
            <person name="Lindblad-Toh K."/>
            <person name="Eichler E.E."/>
            <person name="Ponting C.P."/>
        </authorList>
    </citation>
    <scope>NUCLEOTIDE SEQUENCE [LARGE SCALE GENOMIC DNA]</scope>
    <source>
        <strain>C57BL/6J</strain>
    </source>
</reference>
<reference key="2">
    <citation type="journal article" date="1998" name="Cell">
        <title>Identification of a gene encoding a hyperpolarization-activated 'pacemaker' channel of brain.</title>
        <authorList>
            <person name="Santoro B."/>
            <person name="Liu D.T."/>
            <person name="Yao H."/>
            <person name="Bartsch D."/>
            <person name="Kandel E.R."/>
            <person name="Siegelbaum S.A."/>
            <person name="Tibbs G.R."/>
        </authorList>
    </citation>
    <scope>NUCLEOTIDE SEQUENCE [MRNA] OF 179-684</scope>
    <source>
        <tissue>Brain</tissue>
    </source>
</reference>
<reference key="3">
    <citation type="journal article" date="2004" name="Genome Res.">
        <title>The status, quality, and expansion of the NIH full-length cDNA project: the Mammalian Gene Collection (MGC).</title>
        <authorList>
            <consortium name="The MGC Project Team"/>
        </authorList>
    </citation>
    <scope>NUCLEOTIDE SEQUENCE [LARGE SCALE MRNA]</scope>
    <source>
        <tissue>Brain</tissue>
    </source>
</reference>
<reference key="4">
    <citation type="journal article" date="2001" name="Nature">
        <title>Hyperpolarization-activated channels HCN1 and HCN4 mediate responses to sour stimuli.</title>
        <authorList>
            <person name="Stevens D.R."/>
            <person name="Seifert R."/>
            <person name="Bufe B."/>
            <person name="Mueller F."/>
            <person name="Kremmer E."/>
            <person name="Gauss R."/>
            <person name="Meyerhof W."/>
            <person name="Kaupp U.B."/>
            <person name="Lindemann B."/>
        </authorList>
    </citation>
    <scope>FUNCTION</scope>
    <scope>SUBCELLULAR LOCATION</scope>
    <scope>TISSUE SPECIFICITY</scope>
</reference>
<reference key="5">
    <citation type="journal article" date="2003" name="Proc. Natl. Acad. Sci. U.S.A.">
        <title>The hyperpolarization-activated channel HCN4 is required for the generation of pacemaker action potentials in the embryonic heart.</title>
        <authorList>
            <person name="Stieber J."/>
            <person name="Herrmann S."/>
            <person name="Feil S."/>
            <person name="Loester J."/>
            <person name="Feil R."/>
            <person name="Biel M."/>
            <person name="Hofmann F."/>
            <person name="Ludwig A."/>
        </authorList>
    </citation>
    <scope>DISRUPTION PHENOTYPE</scope>
    <scope>FUNCTION</scope>
</reference>
<reference key="6">
    <citation type="journal article" date="2010" name="Cell">
        <title>A tissue-specific atlas of mouse protein phosphorylation and expression.</title>
        <authorList>
            <person name="Huttlin E.L."/>
            <person name="Jedrychowski M.P."/>
            <person name="Elias J.E."/>
            <person name="Goswami T."/>
            <person name="Rad R."/>
            <person name="Beausoleil S.A."/>
            <person name="Villen J."/>
            <person name="Haas W."/>
            <person name="Sowa M.E."/>
            <person name="Gygi S.P."/>
        </authorList>
    </citation>
    <scope>PHOSPHORYLATION [LARGE SCALE ANALYSIS] AT SER-1105 AND SER-1108</scope>
    <scope>IDENTIFICATION BY MASS SPECTROMETRY [LARGE SCALE ANALYSIS]</scope>
    <source>
        <tissue>Brain</tissue>
    </source>
</reference>
<reference key="7">
    <citation type="journal article" date="2011" name="Proc. Natl. Acad. Sci. U.S.A.">
        <title>Deep bradycardia and heart block caused by inducible cardiac-specific knockout of the pacemaker channel gene Hcn4.</title>
        <authorList>
            <person name="Baruscotti M."/>
            <person name="Bucchi A."/>
            <person name="Viscomi C."/>
            <person name="Mandelli G."/>
            <person name="Consalez G."/>
            <person name="Gnecchi-Rusconi T."/>
            <person name="Montano N."/>
            <person name="Casali K.R."/>
            <person name="Micheloni S."/>
            <person name="Barbuti A."/>
            <person name="DiFrancesco D."/>
        </authorList>
    </citation>
    <scope>DISRUPTION PHENOTYPE</scope>
    <scope>FUNCTION</scope>
</reference>
<reference key="8">
    <citation type="journal article" date="2012" name="J. Biol. Chem.">
        <title>Regulation of hyperpolarization-activated cyclic nucleotide-gated (HCN) channel activity by cCMP.</title>
        <authorList>
            <person name="Zong X."/>
            <person name="Krause S."/>
            <person name="Chen C.C."/>
            <person name="Krueger J."/>
            <person name="Gruner C."/>
            <person name="Cao-Ehlker X."/>
            <person name="Fenske S."/>
            <person name="Wahl-Schott C."/>
            <person name="Biel M."/>
        </authorList>
    </citation>
    <scope>FUNCTION</scope>
    <scope>ACTIVITY REGULATION</scope>
</reference>
<reference key="9">
    <citation type="journal article" date="2020" name="Proc. Natl. Acad. Sci. U.S.A.">
        <title>Isoform-specific regulation of HCN4 channels by a family of endoplasmic reticulum proteins.</title>
        <authorList>
            <person name="Peters C.H."/>
            <person name="Myers M.E."/>
            <person name="Juchno J."/>
            <person name="Haimbaugh C."/>
            <person name="Bichraoui H."/>
            <person name="Du Y."/>
            <person name="Bankston J.R."/>
            <person name="Walker L.A."/>
            <person name="Proenza C."/>
        </authorList>
    </citation>
    <scope>INTERACTION WITH IRAG1 AND IRAG2</scope>
</reference>
<feature type="chain" id="PRO_0000054118" description="Potassium/sodium hyperpolarization-activated cyclic nucleotide-gated channel 4">
    <location>
        <begin position="1"/>
        <end position="1201"/>
    </location>
</feature>
<feature type="topological domain" description="Cytoplasmic" evidence="12">
    <location>
        <begin position="1"/>
        <end position="263"/>
    </location>
</feature>
<feature type="transmembrane region" description="Helical; Name=Segment S1" evidence="4">
    <location>
        <begin position="264"/>
        <end position="286"/>
    </location>
</feature>
<feature type="topological domain" description="Extracellular" evidence="12">
    <location>
        <begin position="287"/>
        <end position="293"/>
    </location>
</feature>
<feature type="transmembrane region" description="Helical; Name=Segment S2" evidence="4">
    <location>
        <begin position="294"/>
        <end position="314"/>
    </location>
</feature>
<feature type="topological domain" description="Cytoplasmic" evidence="12">
    <location>
        <begin position="315"/>
        <end position="336"/>
    </location>
</feature>
<feature type="transmembrane region" description="Helical; Name=Segment S3" evidence="4">
    <location>
        <begin position="337"/>
        <end position="359"/>
    </location>
</feature>
<feature type="topological domain" description="Extracellular" evidence="12">
    <location>
        <begin position="360"/>
        <end position="378"/>
    </location>
</feature>
<feature type="transmembrane region" description="Helical; Voltage-sensor; Name=Segment S4" evidence="4">
    <location>
        <begin position="379"/>
        <end position="399"/>
    </location>
</feature>
<feature type="topological domain" description="Cytoplasmic" evidence="12">
    <location>
        <begin position="400"/>
        <end position="413"/>
    </location>
</feature>
<feature type="transmembrane region" description="Helical; Name=Segment S5" evidence="4">
    <location>
        <begin position="414"/>
        <end position="436"/>
    </location>
</feature>
<feature type="topological domain" description="Extracellular" evidence="12">
    <location>
        <begin position="437"/>
        <end position="464"/>
    </location>
</feature>
<feature type="intramembrane region" description="Pore-forming; Name=Segment H5" evidence="4">
    <location>
        <begin position="465"/>
        <end position="486"/>
    </location>
</feature>
<feature type="topological domain" description="Extracellular" evidence="12">
    <location>
        <begin position="487"/>
        <end position="491"/>
    </location>
</feature>
<feature type="transmembrane region" description="Helical; Name=Segment S6" evidence="4">
    <location>
        <begin position="492"/>
        <end position="517"/>
    </location>
</feature>
<feature type="topological domain" description="Cytoplasmic" evidence="12">
    <location>
        <begin position="518"/>
        <end position="1201"/>
    </location>
</feature>
<feature type="region of interest" description="Disordered" evidence="6">
    <location>
        <begin position="24"/>
        <end position="183"/>
    </location>
</feature>
<feature type="region of interest" description="Involved in subunit assembly" evidence="1">
    <location>
        <begin position="209"/>
        <end position="260"/>
    </location>
</feature>
<feature type="region of interest" description="Disordered" evidence="6">
    <location>
        <begin position="804"/>
        <end position="902"/>
    </location>
</feature>
<feature type="region of interest" description="Disordered" evidence="6">
    <location>
        <begin position="914"/>
        <end position="1201"/>
    </location>
</feature>
<feature type="compositionally biased region" description="Acidic residues" evidence="6">
    <location>
        <begin position="26"/>
        <end position="36"/>
    </location>
</feature>
<feature type="compositionally biased region" description="Gly residues" evidence="6">
    <location>
        <begin position="105"/>
        <end position="118"/>
    </location>
</feature>
<feature type="compositionally biased region" description="Basic and acidic residues" evidence="6">
    <location>
        <begin position="121"/>
        <end position="132"/>
    </location>
</feature>
<feature type="compositionally biased region" description="Pro residues" evidence="6">
    <location>
        <begin position="164"/>
        <end position="174"/>
    </location>
</feature>
<feature type="compositionally biased region" description="Low complexity" evidence="6">
    <location>
        <begin position="831"/>
        <end position="856"/>
    </location>
</feature>
<feature type="compositionally biased region" description="Low complexity" evidence="6">
    <location>
        <begin position="866"/>
        <end position="880"/>
    </location>
</feature>
<feature type="compositionally biased region" description="Pro residues" evidence="6">
    <location>
        <begin position="881"/>
        <end position="894"/>
    </location>
</feature>
<feature type="compositionally biased region" description="Low complexity" evidence="6">
    <location>
        <begin position="915"/>
        <end position="939"/>
    </location>
</feature>
<feature type="compositionally biased region" description="Low complexity" evidence="6">
    <location>
        <begin position="967"/>
        <end position="995"/>
    </location>
</feature>
<feature type="compositionally biased region" description="Pro residues" evidence="6">
    <location>
        <begin position="1029"/>
        <end position="1042"/>
    </location>
</feature>
<feature type="compositionally biased region" description="Low complexity" evidence="6">
    <location>
        <begin position="1045"/>
        <end position="1056"/>
    </location>
</feature>
<feature type="compositionally biased region" description="Gly residues" evidence="6">
    <location>
        <begin position="1122"/>
        <end position="1134"/>
    </location>
</feature>
<feature type="binding site" evidence="4">
    <location>
        <position position="559"/>
    </location>
    <ligand>
        <name>3',5'-cyclic GMP</name>
        <dbReference type="ChEBI" id="CHEBI:57746"/>
    </ligand>
</feature>
<feature type="binding site" evidence="4">
    <location>
        <position position="562"/>
    </location>
    <ligand>
        <name>3',5'-cyclic GMP</name>
        <dbReference type="ChEBI" id="CHEBI:57746"/>
    </ligand>
</feature>
<feature type="binding site" evidence="4">
    <location>
        <position position="564"/>
    </location>
    <ligand>
        <name>3',5'-cyclic GMP</name>
        <dbReference type="ChEBI" id="CHEBI:57746"/>
    </ligand>
</feature>
<feature type="binding site" evidence="4">
    <location>
        <position position="566"/>
    </location>
    <ligand>
        <name>3',5'-cyclic GMP</name>
        <dbReference type="ChEBI" id="CHEBI:57746"/>
    </ligand>
</feature>
<feature type="binding site" evidence="4">
    <location>
        <position position="659"/>
    </location>
    <ligand>
        <name>3',5'-cyclic AMP</name>
        <dbReference type="ChEBI" id="CHEBI:58165"/>
    </ligand>
</feature>
<feature type="binding site" evidence="3">
    <location>
        <position position="660"/>
    </location>
    <ligand>
        <name>3',5'-cyclic AMP</name>
        <dbReference type="ChEBI" id="CHEBI:58165"/>
    </ligand>
</feature>
<feature type="binding site" evidence="4">
    <location>
        <position position="662"/>
    </location>
    <ligand>
        <name>3',5'-cyclic AMP</name>
        <dbReference type="ChEBI" id="CHEBI:58165"/>
    </ligand>
</feature>
<feature type="binding site" evidence="4">
    <location>
        <position position="669"/>
    </location>
    <ligand>
        <name>3',5'-cyclic AMP</name>
        <dbReference type="ChEBI" id="CHEBI:58165"/>
    </ligand>
</feature>
<feature type="binding site" evidence="4">
    <location>
        <position position="670"/>
    </location>
    <ligand>
        <name>3',5'-cyclic AMP</name>
        <dbReference type="ChEBI" id="CHEBI:58165"/>
    </ligand>
</feature>
<feature type="binding site" evidence="3">
    <location>
        <position position="673"/>
    </location>
    <ligand>
        <name>3',5'-cyclic AMP</name>
        <dbReference type="ChEBI" id="CHEBI:58165"/>
    </ligand>
</feature>
<feature type="binding site" evidence="4">
    <location>
        <position position="710"/>
    </location>
    <ligand>
        <name>3',5'-cyclic AMP</name>
        <dbReference type="ChEBI" id="CHEBI:58165"/>
    </ligand>
</feature>
<feature type="modified residue" description="Phosphoserine" evidence="2">
    <location>
        <position position="139"/>
    </location>
</feature>
<feature type="modified residue" description="Phosphoserine" evidence="13">
    <location>
        <position position="1105"/>
    </location>
</feature>
<feature type="modified residue" description="Phosphoserine" evidence="13">
    <location>
        <position position="1108"/>
    </location>
</feature>
<feature type="glycosylation site" description="N-linked (GlcNAc...) asparagine" evidence="5">
    <location>
        <position position="458"/>
    </location>
</feature>
<feature type="sequence conflict" description="In Ref. 2; AAC40126." evidence="12" ref="2">
    <original>SDQ</original>
    <variation>IDH</variation>
    <location>
        <begin position="197"/>
        <end position="199"/>
    </location>
</feature>
<feature type="sequence conflict" description="In Ref. 2; AAC40126." evidence="12" ref="2">
    <original>D</original>
    <variation>E</variation>
    <location>
        <position position="353"/>
    </location>
</feature>
<feature type="sequence conflict" description="In Ref. 2; AAC40126." evidence="12" ref="2">
    <original>L</original>
    <variation>V</variation>
    <location>
        <position position="374"/>
    </location>
</feature>
<feature type="sequence conflict" description="In Ref. 2; AAC40126." evidence="12" ref="2">
    <original>K</original>
    <variation>R</variation>
    <location>
        <position position="651"/>
    </location>
</feature>
<sequence length="1201" mass="129065">MDKLPPSMRKRLYSLPQQVGAKAWIMDEEEDGEEEGAGGRQDPSRRSIRLRPLPSPSPSVAAGCSESRGAALGATESEGPGRSAGKSSTNGDCRRFRGSLASLGSRGGGSGGAGGGSSLGHLHDSAEERRLIAAEGDASPGEDRTPPGLATEPERPATAAQPAASPPPQQPPQPASASCEQPSADTAIKVEGGAAASDQILPEAEVRLGQSGFMQRQFGAMLQPGVNKFSLRMFGSQKAVEREQERVKSAGFWIIHPYSDFRFYWDLTMLLLMVGNLIIIPVGITFFKDENTTPWIVFNVVSDTFFLIDLVLNFRTGIVVEDNTEIILDPQRIKMKYLKSWFVVDFISSIPVDYIFLIVETRIDSEVYKTARALRIVRFTKILSLLRLLRLSRLIRYIHQWEEIFHMTYDLASAVVRIVNLIGMMLLLCHWDGCLQFLVPMLQDFPHDCWVSINGMVNNSWGKQYSYALFKAMSHMLCIGYGRQAPVGMSDVWLTMLSMIVGATCYAMFIGHATALIQSLDSSRRQYQEKYKQVEQYMSFHKLPPDTRQRIHDYYEHRYQGKMFDEESILGELSEPLREEIINFNCRKLVASMPLFANADPNFVTSMLTKLRFEVFQPGDYIIREGTIGKKMYFIQHGVVSVLTKGNKETKLADGSYFGEICLLTRGRRTASVRADTYCRLYSLSVDNFNEVLEEYPMMRRAFETVALDRLDRIGKKNSILLHKVQHDLNSGVFNYQENEIIQQIVRHDREMAHCAHRVQAAASATPTPTPVIWTPLIQAPLQAAAATTSVAIALTHHPRLPAAIFRPPPGPGLGNLGAGQTPRHPRRLQSLIPSALGSASPASSPSQVDTPSSSSFHIQQLAGFSAPPGLSPLLPSSSSSPPPGACGSPPAPTPSTSTAAAASTTGFGHFHKALGGSLSSSDSPLLTPLQPGARSPQAAQPPPPLPGARGGLGLLEHFLPPPPSSRSPSSSPGQLGQPPGELSLGLAAGPSSTPETPPRPERPSFMAGASGGASPVAFTPRGGLSPPGHSPGPPRTFPSAPPRASGSHGSLLLPPASSPPPPQVPQRRGTPPLTPGRLTQDLKLISASQPALPQDGAQTLRRASPHSSGESVAAFSLYPRAGGGSGSSGGLGPPGRPYGAIPGQHVTLPRKTSSGSLPPPLSLFGARAASSGGPPLTTAAPQREPGARSEPVRSKLPSNL</sequence>
<protein>
    <recommendedName>
        <fullName>Potassium/sodium hyperpolarization-activated cyclic nucleotide-gated channel 4</fullName>
    </recommendedName>
    <alternativeName>
        <fullName>Brain cyclic nucleotide-gated channel 3</fullName>
        <shortName>BCNG-3</shortName>
    </alternativeName>
</protein>
<accession>O70507</accession>
<accession>B2RY58</accession>
<gene>
    <name type="primary">Hcn4</name>
    <name type="synonym">Bcng3</name>
</gene>
<evidence type="ECO:0000250" key="1"/>
<evidence type="ECO:0000250" key="2">
    <source>
        <dbReference type="UniProtKB" id="Q9JKA7"/>
    </source>
</evidence>
<evidence type="ECO:0000250" key="3">
    <source>
        <dbReference type="UniProtKB" id="Q9TV66"/>
    </source>
</evidence>
<evidence type="ECO:0000250" key="4">
    <source>
        <dbReference type="UniProtKB" id="Q9Y3Q4"/>
    </source>
</evidence>
<evidence type="ECO:0000255" key="5"/>
<evidence type="ECO:0000256" key="6">
    <source>
        <dbReference type="SAM" id="MobiDB-lite"/>
    </source>
</evidence>
<evidence type="ECO:0000269" key="7">
    <source>
    </source>
</evidence>
<evidence type="ECO:0000269" key="8">
    <source>
    </source>
</evidence>
<evidence type="ECO:0000269" key="9">
    <source>
    </source>
</evidence>
<evidence type="ECO:0000269" key="10">
    <source>
    </source>
</evidence>
<evidence type="ECO:0000269" key="11">
    <source>
    </source>
</evidence>
<evidence type="ECO:0000305" key="12"/>
<evidence type="ECO:0007744" key="13">
    <source>
    </source>
</evidence>
<comment type="function">
    <text evidence="4 7 8 9">Hyperpolarization-activated ion channel that are permeable to Na(+) and K(+) ions with very slow activation and inactivation. Exhibits higher selectivity for K(+) over Na(+) ions (By similarity). Contributes to the native pacemaker currents in heart (If) that regulate the rhythm of heart beat (PubMed:14657344, PubMed:21220308). Contributes to the native pacemaker currents in neurons (Ih) (By similarity). May mediate responses to sour stimuli (PubMed:11675786).</text>
</comment>
<comment type="catalytic activity">
    <reaction evidence="4">
        <text>K(+)(in) = K(+)(out)</text>
        <dbReference type="Rhea" id="RHEA:29463"/>
        <dbReference type="ChEBI" id="CHEBI:29103"/>
    </reaction>
</comment>
<comment type="catalytic activity">
    <reaction evidence="4">
        <text>Na(+)(in) = Na(+)(out)</text>
        <dbReference type="Rhea" id="RHEA:34963"/>
        <dbReference type="ChEBI" id="CHEBI:29101"/>
    </reaction>
</comment>
<comment type="activity regulation">
    <text evidence="4 10 11">Activated by cAMP, and to a lesser extent by cGMP and cCMP (PubMed:22715094). cAMP binding causes a conformation change that leads to the assembly of an active tetramer and channel opening. Binding of cAMP removes a tonic inhibition conferred by cyclic nucleotide-binding domain (CNBD) on channel opening. Cyclic dinucleotides can modulate HCN4 channel; cyclic dinucleotides acting as potent antagonists of cAMP. Inhibited by extracellular Cs(+) ions (By similarity). Auxiliary subunits can also regulate HCN4 channel. IRAG1 causes a gain-of-function by shifting HCN4 activation to more depolarized membrane potentials in the absence of cAMP. In contrast, IRAG2 causes a loss-of-function by inhibiting cAMP-dependent potentiation of HCN4 activation (PubMed:32647060).</text>
</comment>
<comment type="subunit">
    <text evidence="3 4 11">Homotetramer (By similarity). The potassium channel is composed of a homo- or heterotetrameric complex of pore-forming subunits (By similarity). Interacts with PEX5L with a 4:4 HCN4:PEX5L stoichiometry; reduces the effects of cAMP on the voltage-dependence and rate of activation (By similarity). Interacts with IRAG1; regulates HCN4 channel activity (PubMed:32647060). Interacts with IRAG2; regulates HCN4 channel activity (PubMed:32647060).</text>
</comment>
<comment type="subcellular location">
    <subcellularLocation>
        <location evidence="7">Cell membrane</location>
        <topology evidence="4">Multi-pass membrane protein</topology>
    </subcellularLocation>
</comment>
<comment type="tissue specificity">
    <text evidence="7">Detected in a subset of elongated cells in taste buds.</text>
</comment>
<comment type="domain">
    <text evidence="4">Contains six transmembrane segments (S1-S6) and an intervening P-loop. The segment S4 is the voltage-sensor and is characterized by a series of positively charged amino acids at every third position, while the S5-S6 segments together with the P-loop form a centrally located pore of the channel. Contains a cyclic nucleotide-binding domain (CNBD) in their C-terminal region. The CNBD is connected to the pore forming transmembrane segment via the C-linker.</text>
</comment>
<comment type="domain">
    <text evidence="4">Contains a unique pocket located in the cytosolic C-terminal domain, identified as a likely binding site for di-cyclic nucleotides.</text>
</comment>
<comment type="PTM">
    <text evidence="4">S-palmitoylated.</text>
</comment>
<comment type="disruption phenotype">
    <text evidence="8 9">Hcn4-deficient mice are embryonically lethal, dying between embryonic days 9.5 and 11.5 due to a failure to generate mature pacemaking cells (PubMed:14657344). Conditional deletion in the adult heart results in cardiac arrhythmia with recurrent sinus pauses, bradycardia, and atrioventricular bloc (PubMed:21220308).</text>
</comment>
<comment type="similarity">
    <text evidence="12">Belongs to the potassium channel HCN family.</text>
</comment>
<name>HCN4_MOUSE</name>
<keyword id="KW-0114">cAMP</keyword>
<keyword id="KW-0116">cAMP-binding</keyword>
<keyword id="KW-1003">Cell membrane</keyword>
<keyword id="KW-0325">Glycoprotein</keyword>
<keyword id="KW-0407">Ion channel</keyword>
<keyword id="KW-0406">Ion transport</keyword>
<keyword id="KW-1071">Ligand-gated ion channel</keyword>
<keyword id="KW-0472">Membrane</keyword>
<keyword id="KW-0547">Nucleotide-binding</keyword>
<keyword id="KW-0597">Phosphoprotein</keyword>
<keyword id="KW-0630">Potassium</keyword>
<keyword id="KW-0631">Potassium channel</keyword>
<keyword id="KW-0633">Potassium transport</keyword>
<keyword id="KW-1185">Reference proteome</keyword>
<keyword id="KW-0915">Sodium</keyword>
<keyword id="KW-0894">Sodium channel</keyword>
<keyword id="KW-0739">Sodium transport</keyword>
<keyword id="KW-0812">Transmembrane</keyword>
<keyword id="KW-1133">Transmembrane helix</keyword>
<keyword id="KW-0813">Transport</keyword>
<keyword id="KW-0851">Voltage-gated channel</keyword>
<organism>
    <name type="scientific">Mus musculus</name>
    <name type="common">Mouse</name>
    <dbReference type="NCBI Taxonomy" id="10090"/>
    <lineage>
        <taxon>Eukaryota</taxon>
        <taxon>Metazoa</taxon>
        <taxon>Chordata</taxon>
        <taxon>Craniata</taxon>
        <taxon>Vertebrata</taxon>
        <taxon>Euteleostomi</taxon>
        <taxon>Mammalia</taxon>
        <taxon>Eutheria</taxon>
        <taxon>Euarchontoglires</taxon>
        <taxon>Glires</taxon>
        <taxon>Rodentia</taxon>
        <taxon>Myomorpha</taxon>
        <taxon>Muroidea</taxon>
        <taxon>Muridae</taxon>
        <taxon>Murinae</taxon>
        <taxon>Mus</taxon>
        <taxon>Mus</taxon>
    </lineage>
</organism>